<keyword id="KW-0472">Membrane</keyword>
<keyword id="KW-0602">Photosynthesis</keyword>
<keyword id="KW-0604">Photosystem II</keyword>
<keyword id="KW-0674">Reaction center</keyword>
<keyword id="KW-0793">Thylakoid</keyword>
<keyword id="KW-0812">Transmembrane</keyword>
<keyword id="KW-1133">Transmembrane helix</keyword>
<comment type="function">
    <text evidence="1">One of the components of the core complex of photosystem II (PSII). PSII is a light-driven water:plastoquinone oxidoreductase that uses light energy to abstract electrons from H(2)O, generating O(2) and a proton gradient subsequently used for ATP formation. It consists of a core antenna complex that captures photons, and an electron transfer chain that converts photonic excitation into a charge separation. This subunit is found at the monomer-monomer interface.</text>
</comment>
<comment type="subunit">
    <text evidence="2">PSII is composed of 1 copy each of membrane proteins PsbA, PsbB, PsbC, PsbD, PsbE, PsbF, PsbH, PsbI, PsbJ, PsbK, PsbL, PsbM, PsbT, PsbX, PsbY, Psb30/Ycf12, peripheral proteins PsbO, CyanoQ (PsbQ), PsbU, PsbV and a large number of cofactors. It forms dimeric complexes.</text>
</comment>
<comment type="subcellular location">
    <subcellularLocation>
        <location evidence="1">Cellular thylakoid membrane</location>
        <topology evidence="1">Single-pass membrane protein</topology>
    </subcellularLocation>
</comment>
<comment type="similarity">
    <text evidence="1">Belongs to the PsbM family.</text>
</comment>
<accession>A8G2X8</accession>
<protein>
    <recommendedName>
        <fullName evidence="1">Photosystem II reaction center protein M</fullName>
        <shortName evidence="1">PSII-M</shortName>
    </recommendedName>
</protein>
<proteinExistence type="inferred from homology"/>
<sequence>METTNFGFVASLLFVGVPTIFLIGLFLSTQEGEKSSFYSDSGKGKLDPKR</sequence>
<dbReference type="EMBL" id="CP000825">
    <property type="protein sequence ID" value="ABV49959.1"/>
    <property type="molecule type" value="Genomic_DNA"/>
</dbReference>
<dbReference type="RefSeq" id="WP_002807437.1">
    <property type="nucleotide sequence ID" value="NC_009840.1"/>
</dbReference>
<dbReference type="SMR" id="A8G2X8"/>
<dbReference type="STRING" id="93060.P9215_03421"/>
<dbReference type="KEGG" id="pmh:P9215_03421"/>
<dbReference type="HOGENOM" id="CLU_215415_0_0_3"/>
<dbReference type="OrthoDB" id="532820at2"/>
<dbReference type="Proteomes" id="UP000002014">
    <property type="component" value="Chromosome"/>
</dbReference>
<dbReference type="GO" id="GO:0009523">
    <property type="term" value="C:photosystem II"/>
    <property type="evidence" value="ECO:0007669"/>
    <property type="project" value="UniProtKB-KW"/>
</dbReference>
<dbReference type="GO" id="GO:0031676">
    <property type="term" value="C:plasma membrane-derived thylakoid membrane"/>
    <property type="evidence" value="ECO:0007669"/>
    <property type="project" value="UniProtKB-SubCell"/>
</dbReference>
<dbReference type="GO" id="GO:0019684">
    <property type="term" value="P:photosynthesis, light reaction"/>
    <property type="evidence" value="ECO:0007669"/>
    <property type="project" value="InterPro"/>
</dbReference>
<dbReference type="HAMAP" id="MF_00438">
    <property type="entry name" value="PSII_PsbM"/>
    <property type="match status" value="1"/>
</dbReference>
<dbReference type="InterPro" id="IPR007826">
    <property type="entry name" value="PSII_PsbM"/>
</dbReference>
<dbReference type="InterPro" id="IPR037269">
    <property type="entry name" value="PSII_PsbM_sf"/>
</dbReference>
<dbReference type="NCBIfam" id="NF010694">
    <property type="entry name" value="PRK14094.1"/>
    <property type="match status" value="1"/>
</dbReference>
<dbReference type="NCBIfam" id="TIGR03038">
    <property type="entry name" value="PS_II_psbM"/>
    <property type="match status" value="1"/>
</dbReference>
<dbReference type="Pfam" id="PF05151">
    <property type="entry name" value="PsbM"/>
    <property type="match status" value="1"/>
</dbReference>
<dbReference type="SUPFAM" id="SSF161033">
    <property type="entry name" value="Photosystem II reaction center protein M, PsbM"/>
    <property type="match status" value="1"/>
</dbReference>
<evidence type="ECO:0000255" key="1">
    <source>
        <dbReference type="HAMAP-Rule" id="MF_00438"/>
    </source>
</evidence>
<evidence type="ECO:0000305" key="2"/>
<gene>
    <name evidence="1" type="primary">psbM</name>
    <name type="ordered locus">P9215_03421</name>
</gene>
<feature type="chain" id="PRO_1000060244" description="Photosystem II reaction center protein M">
    <location>
        <begin position="1"/>
        <end position="50"/>
    </location>
</feature>
<feature type="transmembrane region" description="Helical" evidence="1">
    <location>
        <begin position="6"/>
        <end position="26"/>
    </location>
</feature>
<name>PSBM_PROM2</name>
<reference key="1">
    <citation type="journal article" date="2007" name="PLoS Genet.">
        <title>Patterns and implications of gene gain and loss in the evolution of Prochlorococcus.</title>
        <authorList>
            <person name="Kettler G.C."/>
            <person name="Martiny A.C."/>
            <person name="Huang K."/>
            <person name="Zucker J."/>
            <person name="Coleman M.L."/>
            <person name="Rodrigue S."/>
            <person name="Chen F."/>
            <person name="Lapidus A."/>
            <person name="Ferriera S."/>
            <person name="Johnson J."/>
            <person name="Steglich C."/>
            <person name="Church G.M."/>
            <person name="Richardson P."/>
            <person name="Chisholm S.W."/>
        </authorList>
    </citation>
    <scope>NUCLEOTIDE SEQUENCE [LARGE SCALE GENOMIC DNA]</scope>
    <source>
        <strain>MIT 9215</strain>
    </source>
</reference>
<organism>
    <name type="scientific">Prochlorococcus marinus (strain MIT 9215)</name>
    <dbReference type="NCBI Taxonomy" id="93060"/>
    <lineage>
        <taxon>Bacteria</taxon>
        <taxon>Bacillati</taxon>
        <taxon>Cyanobacteriota</taxon>
        <taxon>Cyanophyceae</taxon>
        <taxon>Synechococcales</taxon>
        <taxon>Prochlorococcaceae</taxon>
        <taxon>Prochlorococcus</taxon>
    </lineage>
</organism>